<accession>C0HKN0</accession>
<protein>
    <recommendedName>
        <fullName evidence="3">Caerulein precursor fragment R6</fullName>
    </recommendedName>
    <alternativeName>
        <fullName evidence="3">CPF-R6</fullName>
    </alternativeName>
</protein>
<dbReference type="GO" id="GO:0005576">
    <property type="term" value="C:extracellular region"/>
    <property type="evidence" value="ECO:0007669"/>
    <property type="project" value="UniProtKB-SubCell"/>
</dbReference>
<dbReference type="GO" id="GO:0006952">
    <property type="term" value="P:defense response"/>
    <property type="evidence" value="ECO:0007669"/>
    <property type="project" value="UniProtKB-KW"/>
</dbReference>
<sequence length="23" mass="2223">GLGSVLGKILKMGANLLGGAPKQ</sequence>
<evidence type="ECO:0000250" key="1">
    <source>
        <dbReference type="UniProtKB" id="C0HK89"/>
    </source>
</evidence>
<evidence type="ECO:0000269" key="2">
    <source>
    </source>
</evidence>
<evidence type="ECO:0000303" key="3">
    <source>
    </source>
</evidence>
<evidence type="ECO:0000305" key="4"/>
<evidence type="ECO:0000305" key="5">
    <source>
    </source>
</evidence>
<feature type="peptide" id="PRO_0000440916" description="Caerulein precursor fragment R6" evidence="2">
    <location>
        <begin position="1"/>
        <end position="23"/>
    </location>
</feature>
<name>CPFR6_XENRU</name>
<comment type="function">
    <text evidence="1">Antimicrobial peptide.</text>
</comment>
<comment type="subcellular location">
    <subcellularLocation>
        <location evidence="2">Secreted</location>
    </subcellularLocation>
</comment>
<comment type="tissue specificity">
    <text evidence="5">Expressed by the skin glands.</text>
</comment>
<comment type="mass spectrometry" mass="2222.4" method="MALDI" evidence="2"/>
<comment type="similarity">
    <text evidence="4">Belongs to the gastrin/cholecystokinin family.</text>
</comment>
<proteinExistence type="evidence at protein level"/>
<organism evidence="3">
    <name type="scientific">Xenopus ruwenzoriensis</name>
    <name type="common">Uganda clawed frog</name>
    <dbReference type="NCBI Taxonomy" id="105430"/>
    <lineage>
        <taxon>Eukaryota</taxon>
        <taxon>Metazoa</taxon>
        <taxon>Chordata</taxon>
        <taxon>Craniata</taxon>
        <taxon>Vertebrata</taxon>
        <taxon>Euteleostomi</taxon>
        <taxon>Amphibia</taxon>
        <taxon>Batrachia</taxon>
        <taxon>Anura</taxon>
        <taxon>Pipoidea</taxon>
        <taxon>Pipidae</taxon>
        <taxon>Xenopodinae</taxon>
        <taxon>Xenopus</taxon>
        <taxon>Xenopus</taxon>
    </lineage>
</organism>
<keyword id="KW-0878">Amphibian defense peptide</keyword>
<keyword id="KW-0929">Antimicrobial</keyword>
<keyword id="KW-0903">Direct protein sequencing</keyword>
<keyword id="KW-0964">Secreted</keyword>
<reference evidence="4" key="1">
    <citation type="journal article" date="2016" name="Comp. Biochem. Physiol.">
        <title>Peptidomic analysis of the extensive array of host-defense peptides in skin secretions of the dodecaploid frog Xenopus ruwenzoriensis (Pipidae).</title>
        <authorList>
            <person name="Coquet L."/>
            <person name="Kolodziejek J."/>
            <person name="Jouenne T."/>
            <person name="Nowotny N."/>
            <person name="King J.D."/>
            <person name="Conlon J.M."/>
        </authorList>
    </citation>
    <scope>PROTEIN SEQUENCE</scope>
    <scope>SUBCELLULAR LOCATION</scope>
    <scope>MASS SPECTROMETRY</scope>
    <source>
        <tissue evidence="3">Skin secretion</tissue>
    </source>
</reference>